<reference key="1">
    <citation type="journal article" date="1992" name="Virology">
        <title>Channel catfish virus: a new type of herpesvirus.</title>
        <authorList>
            <person name="Davison A.J."/>
        </authorList>
    </citation>
    <scope>NUCLEOTIDE SEQUENCE [LARGE SCALE GENOMIC DNA]</scope>
</reference>
<dbReference type="EMBL" id="M75136">
    <property type="protein sequence ID" value="AAA88158.1"/>
    <property type="molecule type" value="Genomic_DNA"/>
</dbReference>
<dbReference type="PIR" id="B36792">
    <property type="entry name" value="B36792"/>
</dbReference>
<dbReference type="RefSeq" id="NP_041146.1">
    <property type="nucleotide sequence ID" value="NC_001493.2"/>
</dbReference>
<dbReference type="GeneID" id="1488450"/>
<dbReference type="KEGG" id="vg:1488450"/>
<dbReference type="Proteomes" id="UP000007643">
    <property type="component" value="Segment"/>
</dbReference>
<feature type="chain" id="PRO_0000222135" description="Uncharacterized protein ORF55">
    <location>
        <begin position="1"/>
        <end position="388"/>
    </location>
</feature>
<organismHost>
    <name type="scientific">Ictaluridae</name>
    <name type="common">bullhead catfishes</name>
    <dbReference type="NCBI Taxonomy" id="7996"/>
</organismHost>
<organism>
    <name type="scientific">Ictalurid herpesvirus 1 (strain Auburn)</name>
    <name type="common">IcHV-1</name>
    <name type="synonym">Channel catfish herpesvirus</name>
    <dbReference type="NCBI Taxonomy" id="766178"/>
    <lineage>
        <taxon>Viruses</taxon>
        <taxon>Duplodnaviria</taxon>
        <taxon>Heunggongvirae</taxon>
        <taxon>Peploviricota</taxon>
        <taxon>Herviviricetes</taxon>
        <taxon>Herpesvirales</taxon>
        <taxon>Alloherpesviridae</taxon>
        <taxon>Ictavirus</taxon>
        <taxon>Ictavirus ictaluridallo1</taxon>
        <taxon>Ictalurid herpesvirus 1</taxon>
    </lineage>
</organism>
<protein>
    <recommendedName>
        <fullName>Uncharacterized protein ORF55</fullName>
    </recommendedName>
</protein>
<keyword id="KW-1185">Reference proteome</keyword>
<sequence>MSLTNKPSFGTLVNFYGTPQVPVEKNGYHVMELTLNIPKKLQTGGLLIVEKITVNVADVAYGARNNGFFTLGTAEAPNIYVIPPTVLLSNPVTDRALFNPQYSEDGVRLGWGSGLLGTEHELSAADLSVIKKLINGCTGKPEPVTRNIGKIEEAHLRLKTSESEAGAPVQCTRCNAMGKARAIPLGDSYVYRIPVHAADAQCKGAKGVAALVTEYDSGLCDLGRIMSLIRTFSTTAPTPIKRLVRESQKVFLEGGLCRGLGSFAIGDTSRFPIPVTFTGSKHRETIIPSELIDYIVQYYQYVDHVGDYVIDPARTQALRLTVYAHMARLGREIQCSVVTKVTFRQFPVNNHTELASWLKELSVYVKDAPVSDTVGLLSMENILALHDS</sequence>
<accession>Q00153</accession>
<gene>
    <name type="primary">ORF55</name>
</gene>
<proteinExistence type="predicted"/>
<name>VG55_ICHVA</name>